<accession>P83865</accession>
<evidence type="ECO:0000250" key="1"/>
<evidence type="ECO:0000250" key="2">
    <source>
        <dbReference type="UniProtKB" id="P62805"/>
    </source>
</evidence>
<evidence type="ECO:0000250" key="3">
    <source>
        <dbReference type="UniProtKB" id="P84040"/>
    </source>
</evidence>
<evidence type="ECO:0000255" key="4"/>
<evidence type="ECO:0000256" key="5">
    <source>
        <dbReference type="SAM" id="MobiDB-lite"/>
    </source>
</evidence>
<evidence type="ECO:0000269" key="6">
    <source>
    </source>
</evidence>
<evidence type="ECO:0000269" key="7">
    <source>
    </source>
</evidence>
<evidence type="ECO:0000305" key="8"/>
<feature type="initiator methionine" description="Removed" evidence="7">
    <location>
        <position position="1"/>
    </location>
</feature>
<feature type="chain" id="PRO_0000158345" description="Histone H4">
    <location>
        <begin position="2"/>
        <end position="103"/>
    </location>
</feature>
<feature type="region of interest" description="Disordered" evidence="5">
    <location>
        <begin position="1"/>
        <end position="20"/>
    </location>
</feature>
<feature type="compositionally biased region" description="Gly residues" evidence="5">
    <location>
        <begin position="1"/>
        <end position="14"/>
    </location>
</feature>
<feature type="modified residue" description="N-acetylthreonine" evidence="7">
    <location>
        <position position="2"/>
    </location>
</feature>
<feature type="modified residue" description="N6-acetyl-N6-methyllysine; alternate" evidence="2">
    <location>
        <position position="6"/>
    </location>
</feature>
<feature type="modified residue" description="N6-acetyllysine" evidence="7">
    <location>
        <position position="6"/>
    </location>
</feature>
<feature type="modified residue" description="N6-acetyllysine" evidence="7">
    <location>
        <position position="9"/>
    </location>
</feature>
<feature type="modified residue" description="N6-acetyl-N6-methyllysine; alternate" evidence="2">
    <location>
        <position position="13"/>
    </location>
</feature>
<feature type="modified residue" description="N6-acetyllysine" evidence="7">
    <location>
        <position position="13"/>
    </location>
</feature>
<feature type="modified residue" description="N6-acetyllysine" evidence="7">
    <location>
        <position position="17"/>
    </location>
</feature>
<feature type="modified residue" description="N6,N6-dimethyllysine" evidence="7">
    <location>
        <position position="21"/>
    </location>
</feature>
<feature type="modified residue" description="N6-methyllysine" evidence="7">
    <location>
        <position position="32"/>
    </location>
</feature>
<protein>
    <recommendedName>
        <fullName>Histone H4</fullName>
    </recommendedName>
</protein>
<name>H4_PENVA</name>
<reference evidence="8" key="1">
    <citation type="journal article" date="2007" name="J. Mass Spectrom.">
        <title>Characterization of antimicrobial histone sequences and posttranslational modifications by mass spectrometry.</title>
        <authorList>
            <person name="Ouvry-Patat S.A."/>
            <person name="Schey K.L."/>
        </authorList>
    </citation>
    <scope>PROTEIN SEQUENCE OF 2-103</scope>
    <scope>MASS SPECTROMETRY</scope>
    <scope>METHYLATION AT LYS-21 AND LYS-32</scope>
    <scope>ACETYLATION AT THR-2; LYS-6; LYS-9; LYS-13 AND LYS-17</scope>
    <source>
        <tissue evidence="7">Hemocyte</tissue>
    </source>
</reference>
<reference evidence="8" key="2">
    <citation type="journal article" date="2004" name="Eur. J. Biochem.">
        <title>Antimicrobial activity of histones from hemocytes of the Pacific white shrimp.</title>
        <authorList>
            <person name="Patat S.A."/>
            <person name="Carnegie R.B."/>
            <person name="Kingsbury C."/>
            <person name="Gross P.S."/>
            <person name="Chapman R."/>
            <person name="Schey K.L."/>
        </authorList>
    </citation>
    <scope>PROTEIN SEQUENCE OF 24-38; 47-56; 61-73 AND 82-93</scope>
    <scope>FUNCTION</scope>
    <scope>MASS SPECTROMETRY</scope>
    <source>
        <tissue evidence="6">Hemocyte</tissue>
    </source>
</reference>
<sequence>MTGRGKGGKGLGKGGAKRHRKVLRDNIQGITKPAIRRLARRGGVKRISGLIYEETRGVLKVFLENVIRDAVTYTEHAKRKTVTAMDVVYALKRXXXTLYGFGG</sequence>
<comment type="function">
    <text evidence="6">Core component of nucleosome. Nucleosomes wrap and compact DNA into chromatin, limiting DNA accessibility to the cellular machineries which require DNA as a template. Histones thereby play a central role in transcription regulation, DNA repair, DNA replication and chromosomal stability. DNA accessibility is regulated via a complex set of post-translational modifications of histones, also called histone code, and nucleosome remodeling.</text>
</comment>
<comment type="function">
    <text evidence="6">A mixture of histones H2B and H4 has antimicrobial activity against the Gram-positive bacterium M.luteus.</text>
</comment>
<comment type="subunit">
    <text evidence="8">The nucleosome is a histone octamer containing two molecules each of H2A, H2B, H3 and H4 assembled in one H3-H4 heterotetramer and two H2A-H2B heterodimers. The octamer wraps approximately 147 bp of DNA.</text>
</comment>
<comment type="subcellular location">
    <subcellularLocation>
        <location evidence="3">Nucleus</location>
    </subcellularLocation>
    <subcellularLocation>
        <location evidence="1">Chromosome</location>
    </subcellularLocation>
</comment>
<comment type="mass spectrometry"/>
<comment type="mass spectrometry">
    <text>With 1 dimethylation and 1 acetylation on a lysine residue.</text>
</comment>
<comment type="mass spectrometry">
    <text>With 1 dimethylation and 2 acetylations on lysine residues.</text>
</comment>
<comment type="mass spectrometry">
    <text>With 1 dimethylation and 3 acetylations on lysine residues.</text>
</comment>
<comment type="similarity">
    <text evidence="4">Belongs to the histone H4 family.</text>
</comment>
<dbReference type="iPTMnet" id="P83865"/>
<dbReference type="OrthoDB" id="6352885at2759"/>
<dbReference type="GO" id="GO:0000786">
    <property type="term" value="C:nucleosome"/>
    <property type="evidence" value="ECO:0000250"/>
    <property type="project" value="UniProtKB"/>
</dbReference>
<dbReference type="GO" id="GO:0005634">
    <property type="term" value="C:nucleus"/>
    <property type="evidence" value="ECO:0007669"/>
    <property type="project" value="UniProtKB-SubCell"/>
</dbReference>
<dbReference type="GO" id="GO:0003677">
    <property type="term" value="F:DNA binding"/>
    <property type="evidence" value="ECO:0000250"/>
    <property type="project" value="UniProtKB"/>
</dbReference>
<dbReference type="GO" id="GO:0046982">
    <property type="term" value="F:protein heterodimerization activity"/>
    <property type="evidence" value="ECO:0007669"/>
    <property type="project" value="InterPro"/>
</dbReference>
<dbReference type="GO" id="GO:0030527">
    <property type="term" value="F:structural constituent of chromatin"/>
    <property type="evidence" value="ECO:0007669"/>
    <property type="project" value="InterPro"/>
</dbReference>
<dbReference type="GO" id="GO:0042742">
    <property type="term" value="P:defense response to bacterium"/>
    <property type="evidence" value="ECO:0000314"/>
    <property type="project" value="UniProtKB"/>
</dbReference>
<dbReference type="GO" id="GO:0006334">
    <property type="term" value="P:nucleosome assembly"/>
    <property type="evidence" value="ECO:0000250"/>
    <property type="project" value="UniProtKB"/>
</dbReference>
<dbReference type="CDD" id="cd22912">
    <property type="entry name" value="HFD_H4"/>
    <property type="match status" value="1"/>
</dbReference>
<dbReference type="FunFam" id="1.10.20.10:FF:000002">
    <property type="entry name" value="Histone H4"/>
    <property type="match status" value="1"/>
</dbReference>
<dbReference type="Gene3D" id="1.10.20.10">
    <property type="entry name" value="Histone, subunit A"/>
    <property type="match status" value="1"/>
</dbReference>
<dbReference type="InterPro" id="IPR035425">
    <property type="entry name" value="CENP-T/H4_C"/>
</dbReference>
<dbReference type="InterPro" id="IPR009072">
    <property type="entry name" value="Histone-fold"/>
</dbReference>
<dbReference type="InterPro" id="IPR001951">
    <property type="entry name" value="Histone_H4"/>
</dbReference>
<dbReference type="InterPro" id="IPR019809">
    <property type="entry name" value="Histone_H4_CS"/>
</dbReference>
<dbReference type="InterPro" id="IPR004823">
    <property type="entry name" value="TAF_TATA-bd_Histone-like_dom"/>
</dbReference>
<dbReference type="PANTHER" id="PTHR10484">
    <property type="entry name" value="HISTONE H4"/>
    <property type="match status" value="1"/>
</dbReference>
<dbReference type="Pfam" id="PF15511">
    <property type="entry name" value="CENP-T_C"/>
    <property type="match status" value="1"/>
</dbReference>
<dbReference type="PRINTS" id="PR00623">
    <property type="entry name" value="HISTONEH4"/>
</dbReference>
<dbReference type="SMART" id="SM00417">
    <property type="entry name" value="H4"/>
    <property type="match status" value="1"/>
</dbReference>
<dbReference type="SMART" id="SM00803">
    <property type="entry name" value="TAF"/>
    <property type="match status" value="1"/>
</dbReference>
<dbReference type="SUPFAM" id="SSF47113">
    <property type="entry name" value="Histone-fold"/>
    <property type="match status" value="1"/>
</dbReference>
<dbReference type="PROSITE" id="PS00047">
    <property type="entry name" value="HISTONE_H4"/>
    <property type="match status" value="1"/>
</dbReference>
<keyword id="KW-0007">Acetylation</keyword>
<keyword id="KW-0044">Antibiotic</keyword>
<keyword id="KW-0929">Antimicrobial</keyword>
<keyword id="KW-0158">Chromosome</keyword>
<keyword id="KW-0903">Direct protein sequencing</keyword>
<keyword id="KW-0238">DNA-binding</keyword>
<keyword id="KW-0488">Methylation</keyword>
<keyword id="KW-0544">Nucleosome core</keyword>
<keyword id="KW-0539">Nucleus</keyword>
<proteinExistence type="evidence at protein level"/>
<organism>
    <name type="scientific">Penaeus vannamei</name>
    <name type="common">Whiteleg shrimp</name>
    <name type="synonym">Litopenaeus vannamei</name>
    <dbReference type="NCBI Taxonomy" id="6689"/>
    <lineage>
        <taxon>Eukaryota</taxon>
        <taxon>Metazoa</taxon>
        <taxon>Ecdysozoa</taxon>
        <taxon>Arthropoda</taxon>
        <taxon>Crustacea</taxon>
        <taxon>Multicrustacea</taxon>
        <taxon>Malacostraca</taxon>
        <taxon>Eumalacostraca</taxon>
        <taxon>Eucarida</taxon>
        <taxon>Decapoda</taxon>
        <taxon>Dendrobranchiata</taxon>
        <taxon>Penaeoidea</taxon>
        <taxon>Penaeidae</taxon>
        <taxon>Penaeus</taxon>
    </lineage>
</organism>